<feature type="chain" id="PRO_1000009461" description="Leucine--tRNA ligase">
    <location>
        <begin position="1"/>
        <end position="815"/>
    </location>
</feature>
<feature type="short sequence motif" description="'HIGH' region">
    <location>
        <begin position="42"/>
        <end position="52"/>
    </location>
</feature>
<feature type="short sequence motif" description="'KMSKS' region">
    <location>
        <begin position="571"/>
        <end position="575"/>
    </location>
</feature>
<feature type="binding site" evidence="1">
    <location>
        <position position="574"/>
    </location>
    <ligand>
        <name>ATP</name>
        <dbReference type="ChEBI" id="CHEBI:30616"/>
    </ligand>
</feature>
<organism>
    <name type="scientific">Vesicomyosocius okutanii subsp. Calyptogena okutanii (strain HA)</name>
    <dbReference type="NCBI Taxonomy" id="412965"/>
    <lineage>
        <taxon>Bacteria</taxon>
        <taxon>Pseudomonadati</taxon>
        <taxon>Pseudomonadota</taxon>
        <taxon>Gammaproteobacteria</taxon>
        <taxon>Candidatus Pseudothioglobaceae</taxon>
        <taxon>Candidatus Vesicomyosocius</taxon>
    </lineage>
</organism>
<name>SYL_VESOH</name>
<dbReference type="EC" id="6.1.1.4" evidence="1"/>
<dbReference type="EMBL" id="AP009247">
    <property type="protein sequence ID" value="BAF61144.1"/>
    <property type="molecule type" value="Genomic_DNA"/>
</dbReference>
<dbReference type="RefSeq" id="WP_011929414.1">
    <property type="nucleotide sequence ID" value="NC_009465.1"/>
</dbReference>
<dbReference type="SMR" id="A5CY09"/>
<dbReference type="STRING" id="412965.COSY_0005"/>
<dbReference type="KEGG" id="vok:COSY_0005"/>
<dbReference type="eggNOG" id="COG0495">
    <property type="taxonomic scope" value="Bacteria"/>
</dbReference>
<dbReference type="HOGENOM" id="CLU_004427_0_0_6"/>
<dbReference type="OrthoDB" id="9810365at2"/>
<dbReference type="Proteomes" id="UP000000247">
    <property type="component" value="Chromosome"/>
</dbReference>
<dbReference type="GO" id="GO:0005829">
    <property type="term" value="C:cytosol"/>
    <property type="evidence" value="ECO:0007669"/>
    <property type="project" value="TreeGrafter"/>
</dbReference>
<dbReference type="GO" id="GO:0002161">
    <property type="term" value="F:aminoacyl-tRNA deacylase activity"/>
    <property type="evidence" value="ECO:0007669"/>
    <property type="project" value="InterPro"/>
</dbReference>
<dbReference type="GO" id="GO:0005524">
    <property type="term" value="F:ATP binding"/>
    <property type="evidence" value="ECO:0007669"/>
    <property type="project" value="UniProtKB-UniRule"/>
</dbReference>
<dbReference type="GO" id="GO:0004823">
    <property type="term" value="F:leucine-tRNA ligase activity"/>
    <property type="evidence" value="ECO:0007669"/>
    <property type="project" value="UniProtKB-UniRule"/>
</dbReference>
<dbReference type="GO" id="GO:0006429">
    <property type="term" value="P:leucyl-tRNA aminoacylation"/>
    <property type="evidence" value="ECO:0007669"/>
    <property type="project" value="UniProtKB-UniRule"/>
</dbReference>
<dbReference type="CDD" id="cd07958">
    <property type="entry name" value="Anticodon_Ia_Leu_BEm"/>
    <property type="match status" value="1"/>
</dbReference>
<dbReference type="CDD" id="cd00812">
    <property type="entry name" value="LeuRS_core"/>
    <property type="match status" value="1"/>
</dbReference>
<dbReference type="FunFam" id="1.10.730.10:FF:000003">
    <property type="entry name" value="Leucine--tRNA ligase"/>
    <property type="match status" value="1"/>
</dbReference>
<dbReference type="FunFam" id="3.40.50.620:FF:000003">
    <property type="entry name" value="Leucine--tRNA ligase"/>
    <property type="match status" value="1"/>
</dbReference>
<dbReference type="Gene3D" id="3.10.20.590">
    <property type="match status" value="1"/>
</dbReference>
<dbReference type="Gene3D" id="3.40.50.620">
    <property type="entry name" value="HUPs"/>
    <property type="match status" value="2"/>
</dbReference>
<dbReference type="Gene3D" id="1.10.730.10">
    <property type="entry name" value="Isoleucyl-tRNA Synthetase, Domain 1"/>
    <property type="match status" value="1"/>
</dbReference>
<dbReference type="HAMAP" id="MF_00049_B">
    <property type="entry name" value="Leu_tRNA_synth_B"/>
    <property type="match status" value="1"/>
</dbReference>
<dbReference type="InterPro" id="IPR001412">
    <property type="entry name" value="aa-tRNA-synth_I_CS"/>
</dbReference>
<dbReference type="InterPro" id="IPR002300">
    <property type="entry name" value="aa-tRNA-synth_Ia"/>
</dbReference>
<dbReference type="InterPro" id="IPR002302">
    <property type="entry name" value="Leu-tRNA-ligase"/>
</dbReference>
<dbReference type="InterPro" id="IPR025709">
    <property type="entry name" value="Leu_tRNA-synth_edit"/>
</dbReference>
<dbReference type="InterPro" id="IPR013155">
    <property type="entry name" value="M/V/L/I-tRNA-synth_anticd-bd"/>
</dbReference>
<dbReference type="InterPro" id="IPR015413">
    <property type="entry name" value="Methionyl/Leucyl_tRNA_Synth"/>
</dbReference>
<dbReference type="InterPro" id="IPR014729">
    <property type="entry name" value="Rossmann-like_a/b/a_fold"/>
</dbReference>
<dbReference type="InterPro" id="IPR009080">
    <property type="entry name" value="tRNAsynth_Ia_anticodon-bd"/>
</dbReference>
<dbReference type="InterPro" id="IPR009008">
    <property type="entry name" value="Val/Leu/Ile-tRNA-synth_edit"/>
</dbReference>
<dbReference type="NCBIfam" id="TIGR00396">
    <property type="entry name" value="leuS_bact"/>
    <property type="match status" value="1"/>
</dbReference>
<dbReference type="PANTHER" id="PTHR43740:SF2">
    <property type="entry name" value="LEUCINE--TRNA LIGASE, MITOCHONDRIAL"/>
    <property type="match status" value="1"/>
</dbReference>
<dbReference type="PANTHER" id="PTHR43740">
    <property type="entry name" value="LEUCYL-TRNA SYNTHETASE"/>
    <property type="match status" value="1"/>
</dbReference>
<dbReference type="Pfam" id="PF08264">
    <property type="entry name" value="Anticodon_1"/>
    <property type="match status" value="1"/>
</dbReference>
<dbReference type="Pfam" id="PF00133">
    <property type="entry name" value="tRNA-synt_1"/>
    <property type="match status" value="1"/>
</dbReference>
<dbReference type="Pfam" id="PF13603">
    <property type="entry name" value="tRNA-synt_1_2"/>
    <property type="match status" value="1"/>
</dbReference>
<dbReference type="Pfam" id="PF09334">
    <property type="entry name" value="tRNA-synt_1g"/>
    <property type="match status" value="1"/>
</dbReference>
<dbReference type="PRINTS" id="PR00985">
    <property type="entry name" value="TRNASYNTHLEU"/>
</dbReference>
<dbReference type="SUPFAM" id="SSF47323">
    <property type="entry name" value="Anticodon-binding domain of a subclass of class I aminoacyl-tRNA synthetases"/>
    <property type="match status" value="1"/>
</dbReference>
<dbReference type="SUPFAM" id="SSF52374">
    <property type="entry name" value="Nucleotidylyl transferase"/>
    <property type="match status" value="1"/>
</dbReference>
<dbReference type="SUPFAM" id="SSF50677">
    <property type="entry name" value="ValRS/IleRS/LeuRS editing domain"/>
    <property type="match status" value="1"/>
</dbReference>
<dbReference type="PROSITE" id="PS00178">
    <property type="entry name" value="AA_TRNA_LIGASE_I"/>
    <property type="match status" value="1"/>
</dbReference>
<reference key="1">
    <citation type="journal article" date="2007" name="Curr. Biol.">
        <title>Reduced genome of the thioautotrophic intracellular symbiont in a deep-sea clam, Calyptogena okutanii.</title>
        <authorList>
            <person name="Kuwahara H."/>
            <person name="Yoshida T."/>
            <person name="Takaki Y."/>
            <person name="Shimamura S."/>
            <person name="Nishi S."/>
            <person name="Harada M."/>
            <person name="Matsuyama K."/>
            <person name="Takishita K."/>
            <person name="Kawato M."/>
            <person name="Uematsu K."/>
            <person name="Fujiwara Y."/>
            <person name="Sato T."/>
            <person name="Kato C."/>
            <person name="Kitagawa M."/>
            <person name="Kato I."/>
            <person name="Maruyama T."/>
        </authorList>
    </citation>
    <scope>NUCLEOTIDE SEQUENCE [LARGE SCALE GENOMIC DNA]</scope>
    <source>
        <strain>HA</strain>
    </source>
</reference>
<protein>
    <recommendedName>
        <fullName evidence="1">Leucine--tRNA ligase</fullName>
        <ecNumber evidence="1">6.1.1.4</ecNumber>
    </recommendedName>
    <alternativeName>
        <fullName evidence="1">Leucyl-tRNA synthetase</fullName>
        <shortName evidence="1">LeuRS</shortName>
    </alternativeName>
</protein>
<keyword id="KW-0030">Aminoacyl-tRNA synthetase</keyword>
<keyword id="KW-0067">ATP-binding</keyword>
<keyword id="KW-0963">Cytoplasm</keyword>
<keyword id="KW-0436">Ligase</keyword>
<keyword id="KW-0547">Nucleotide-binding</keyword>
<keyword id="KW-0648">Protein biosynthesis</keyword>
<keyword id="KW-1185">Reference proteome</keyword>
<comment type="catalytic activity">
    <reaction evidence="1">
        <text>tRNA(Leu) + L-leucine + ATP = L-leucyl-tRNA(Leu) + AMP + diphosphate</text>
        <dbReference type="Rhea" id="RHEA:11688"/>
        <dbReference type="Rhea" id="RHEA-COMP:9613"/>
        <dbReference type="Rhea" id="RHEA-COMP:9622"/>
        <dbReference type="ChEBI" id="CHEBI:30616"/>
        <dbReference type="ChEBI" id="CHEBI:33019"/>
        <dbReference type="ChEBI" id="CHEBI:57427"/>
        <dbReference type="ChEBI" id="CHEBI:78442"/>
        <dbReference type="ChEBI" id="CHEBI:78494"/>
        <dbReference type="ChEBI" id="CHEBI:456215"/>
        <dbReference type="EC" id="6.1.1.4"/>
    </reaction>
</comment>
<comment type="subcellular location">
    <subcellularLocation>
        <location evidence="1">Cytoplasm</location>
    </subcellularLocation>
</comment>
<comment type="similarity">
    <text evidence="1">Belongs to the class-I aminoacyl-tRNA synthetase family.</text>
</comment>
<accession>A5CY09</accession>
<proteinExistence type="inferred from homology"/>
<sequence>MNIKYDVQKIEKQAQKYWKEKKSFEVIEDYSKEKYYCLSMFPYPSGRLHMGHVRNYSIGDVISRFQRMQGKNVMQPIGWDGFGLPAENAALKNKESPAKWTYKNINYMKTQLNQLGFGYDWAREITTCHPKYYRWEQWLFIKLFKKNLIYKKKAIVNWDPVDQTVLANEQVINGRGWRSNALIEKKEISQWFIRITNYAEELLNDLDKLYGWPDPVKIMQKNWIGKSIGLEITFSRRNSDPLIIYTTRPDTLMGVTYLAISFEHPLALESGKNNYQVQSFIEKCKTIQTSEILNEIMDKKGIDSGFKCIHPITNNEVPIWITNFVLMSYGTGAIMSVPAHDKRDFKFAKKYGIFIKQVINKNESIDKGPIINKGKLFNSEEFSGMDFNQAYESIAKTLIEKNLGNKKINYRLRDWGISRQRYWGCPIPIVNCKYCGSVTVKVKDLPVILPEKVKFYDVSSPIKKMPNFYQTICPKCGSKAHRETDTFDTFFESSWYFARHTCNNNNNAMLDKRVNYWLEVDQYIGGVEHSILHLLYARFFNKLLRDEGLIKYDEPFKNLLTQGMVLKNGVKMSKSKGNTVDPTKMIKKYGADTVRLFILFAAPPMQDLEWNNSGLEGAHRFIKKVYRLVSIYINDSKDYIVNHLNINFLNKTQKHIRRKIHQNLVKITDDINRRYTFNTAISTLMESVDIINKFTKTDTQSIALRSESINIILLTLSPITPHICHYLWLKLGNKKAIINEPWPKVDLKALIESEVQIIIQVDGKLRDKMMMMINTDKEILESEVLSNKNIIKFTKNKNIIKIIIIHNKLINIVTK</sequence>
<evidence type="ECO:0000255" key="1">
    <source>
        <dbReference type="HAMAP-Rule" id="MF_00049"/>
    </source>
</evidence>
<gene>
    <name evidence="1" type="primary">leuS</name>
    <name type="ordered locus">COSY_0005</name>
</gene>